<reference key="1">
    <citation type="journal article" date="2005" name="BMC Genomics">
        <title>Characterization of 954 bovine full-CDS cDNA sequences.</title>
        <authorList>
            <person name="Harhay G.P."/>
            <person name="Sonstegard T.S."/>
            <person name="Keele J.W."/>
            <person name="Heaton M.P."/>
            <person name="Clawson M.L."/>
            <person name="Snelling W.M."/>
            <person name="Wiedmann R.T."/>
            <person name="Van Tassell C.P."/>
            <person name="Smith T.P.L."/>
        </authorList>
    </citation>
    <scope>NUCLEOTIDE SEQUENCE [LARGE SCALE MRNA]</scope>
</reference>
<reference key="2">
    <citation type="submission" date="2007-07" db="EMBL/GenBank/DDBJ databases">
        <authorList>
            <consortium name="NIH - Mammalian Gene Collection (MGC) project"/>
        </authorList>
    </citation>
    <scope>NUCLEOTIDE SEQUENCE [LARGE SCALE MRNA]</scope>
    <source>
        <strain>Hereford</strain>
        <tissue>Fetal skin</tissue>
    </source>
</reference>
<evidence type="ECO:0000250" key="1"/>
<evidence type="ECO:0000305" key="2"/>
<gene>
    <name type="primary">ARL15</name>
</gene>
<organism>
    <name type="scientific">Bos taurus</name>
    <name type="common">Bovine</name>
    <dbReference type="NCBI Taxonomy" id="9913"/>
    <lineage>
        <taxon>Eukaryota</taxon>
        <taxon>Metazoa</taxon>
        <taxon>Chordata</taxon>
        <taxon>Craniata</taxon>
        <taxon>Vertebrata</taxon>
        <taxon>Euteleostomi</taxon>
        <taxon>Mammalia</taxon>
        <taxon>Eutheria</taxon>
        <taxon>Laurasiatheria</taxon>
        <taxon>Artiodactyla</taxon>
        <taxon>Ruminantia</taxon>
        <taxon>Pecora</taxon>
        <taxon>Bovidae</taxon>
        <taxon>Bovinae</taxon>
        <taxon>Bos</taxon>
    </lineage>
</organism>
<accession>Q5EA19</accession>
<accession>A6QR25</accession>
<protein>
    <recommendedName>
        <fullName>ADP-ribosylation factor-like protein 15</fullName>
    </recommendedName>
</protein>
<sequence length="202" mass="22608">MSDLRISEAFLYMDYLCFRALCCKGPPPARPEYDLVCIGLTGSGKTSLLSKLCSESPDSVVSTTGFSIKAVPFQNAILNVKELGGADNIRKYWSRYYQGSQGVIFVLDSASSEDDLETARNELHSALQHPQLCTLPFLILANHQDKPAARSVQEVKKYFELEPLARGKRWILQPCSLDDMEALKDSFSQLINLLEDHEAVRM</sequence>
<name>ARL15_BOVIN</name>
<comment type="similarity">
    <text evidence="2">Belongs to the small GTPase superfamily. Arf family.</text>
</comment>
<dbReference type="EMBL" id="BT020750">
    <property type="protein sequence ID" value="AAX08767.1"/>
    <property type="molecule type" value="mRNA"/>
</dbReference>
<dbReference type="EMBL" id="BC150085">
    <property type="protein sequence ID" value="AAI50086.1"/>
    <property type="molecule type" value="mRNA"/>
</dbReference>
<dbReference type="RefSeq" id="NP_001014943.1">
    <property type="nucleotide sequence ID" value="NM_001014943.1"/>
</dbReference>
<dbReference type="SMR" id="Q5EA19"/>
<dbReference type="FunCoup" id="Q5EA19">
    <property type="interactions" value="230"/>
</dbReference>
<dbReference type="STRING" id="9913.ENSBTAP00000026428"/>
<dbReference type="PaxDb" id="9913-ENSBTAP00000026428"/>
<dbReference type="Ensembl" id="ENSBTAT00000095842.1">
    <property type="protein sequence ID" value="ENSBTAP00000100877.1"/>
    <property type="gene ID" value="ENSBTAG00000019834.6"/>
</dbReference>
<dbReference type="GeneID" id="534329"/>
<dbReference type="KEGG" id="bta:534329"/>
<dbReference type="CTD" id="54622"/>
<dbReference type="eggNOG" id="KOG0071">
    <property type="taxonomic scope" value="Eukaryota"/>
</dbReference>
<dbReference type="GeneTree" id="ENSGT00940000156244"/>
<dbReference type="HOGENOM" id="CLU_040729_13_0_1"/>
<dbReference type="InParanoid" id="Q5EA19"/>
<dbReference type="OrthoDB" id="414781at2759"/>
<dbReference type="Proteomes" id="UP000009136">
    <property type="component" value="Chromosome 20"/>
</dbReference>
<dbReference type="GO" id="GO:0005525">
    <property type="term" value="F:GTP binding"/>
    <property type="evidence" value="ECO:0007669"/>
    <property type="project" value="UniProtKB-KW"/>
</dbReference>
<dbReference type="GO" id="GO:0003924">
    <property type="term" value="F:GTPase activity"/>
    <property type="evidence" value="ECO:0007669"/>
    <property type="project" value="InterPro"/>
</dbReference>
<dbReference type="CDD" id="cd04162">
    <property type="entry name" value="Arl9_Arfrp2_like"/>
    <property type="match status" value="1"/>
</dbReference>
<dbReference type="FunFam" id="3.40.50.300:FF:000934">
    <property type="entry name" value="ADP-ribosylation factor-like 15 isoform X1"/>
    <property type="match status" value="1"/>
</dbReference>
<dbReference type="Gene3D" id="3.40.50.300">
    <property type="entry name" value="P-loop containing nucleotide triphosphate hydrolases"/>
    <property type="match status" value="1"/>
</dbReference>
<dbReference type="InterPro" id="IPR042292">
    <property type="entry name" value="ARL15"/>
</dbReference>
<dbReference type="InterPro" id="IPR027417">
    <property type="entry name" value="P-loop_NTPase"/>
</dbReference>
<dbReference type="InterPro" id="IPR006689">
    <property type="entry name" value="Small_GTPase_ARF/SAR"/>
</dbReference>
<dbReference type="PANTHER" id="PTHR46693">
    <property type="entry name" value="ADP-RIBOSYLATION FACTOR-LIKE PROTEIN 15"/>
    <property type="match status" value="1"/>
</dbReference>
<dbReference type="PANTHER" id="PTHR46693:SF1">
    <property type="entry name" value="ADP-RIBOSYLATION FACTOR-LIKE PROTEIN 15"/>
    <property type="match status" value="1"/>
</dbReference>
<dbReference type="Pfam" id="PF00025">
    <property type="entry name" value="Arf"/>
    <property type="match status" value="1"/>
</dbReference>
<dbReference type="PRINTS" id="PR00328">
    <property type="entry name" value="SAR1GTPBP"/>
</dbReference>
<dbReference type="SMART" id="SM00177">
    <property type="entry name" value="ARF"/>
    <property type="match status" value="1"/>
</dbReference>
<dbReference type="SMART" id="SM00178">
    <property type="entry name" value="SAR"/>
    <property type="match status" value="1"/>
</dbReference>
<dbReference type="SUPFAM" id="SSF52540">
    <property type="entry name" value="P-loop containing nucleoside triphosphate hydrolases"/>
    <property type="match status" value="1"/>
</dbReference>
<dbReference type="PROSITE" id="PS51417">
    <property type="entry name" value="ARF"/>
    <property type="match status" value="1"/>
</dbReference>
<keyword id="KW-0342">GTP-binding</keyword>
<keyword id="KW-0547">Nucleotide-binding</keyword>
<keyword id="KW-1185">Reference proteome</keyword>
<proteinExistence type="evidence at transcript level"/>
<feature type="chain" id="PRO_0000282386" description="ADP-ribosylation factor-like protein 15">
    <location>
        <begin position="1"/>
        <end position="202"/>
    </location>
</feature>
<feature type="binding site" evidence="1">
    <location>
        <begin position="39"/>
        <end position="46"/>
    </location>
    <ligand>
        <name>GTP</name>
        <dbReference type="ChEBI" id="CHEBI:37565"/>
    </ligand>
</feature>
<feature type="binding site" evidence="1">
    <location>
        <begin position="82"/>
        <end position="86"/>
    </location>
    <ligand>
        <name>GTP</name>
        <dbReference type="ChEBI" id="CHEBI:37565"/>
    </ligand>
</feature>
<feature type="binding site" evidence="1">
    <location>
        <begin position="142"/>
        <end position="145"/>
    </location>
    <ligand>
        <name>GTP</name>
        <dbReference type="ChEBI" id="CHEBI:37565"/>
    </ligand>
</feature>